<organism>
    <name type="scientific">Homo sapiens</name>
    <name type="common">Human</name>
    <dbReference type="NCBI Taxonomy" id="9606"/>
    <lineage>
        <taxon>Eukaryota</taxon>
        <taxon>Metazoa</taxon>
        <taxon>Chordata</taxon>
        <taxon>Craniata</taxon>
        <taxon>Vertebrata</taxon>
        <taxon>Euteleostomi</taxon>
        <taxon>Mammalia</taxon>
        <taxon>Eutheria</taxon>
        <taxon>Euarchontoglires</taxon>
        <taxon>Primates</taxon>
        <taxon>Haplorrhini</taxon>
        <taxon>Catarrhini</taxon>
        <taxon>Hominidae</taxon>
        <taxon>Homo</taxon>
    </lineage>
</organism>
<reference evidence="7 9" key="1">
    <citation type="journal article" date="2004" name="Nat. Genet.">
        <title>Complete sequencing and characterization of 21,243 full-length human cDNAs.</title>
        <authorList>
            <person name="Ota T."/>
            <person name="Suzuki Y."/>
            <person name="Nishikawa T."/>
            <person name="Otsuki T."/>
            <person name="Sugiyama T."/>
            <person name="Irie R."/>
            <person name="Wakamatsu A."/>
            <person name="Hayashi K."/>
            <person name="Sato H."/>
            <person name="Nagai K."/>
            <person name="Kimura K."/>
            <person name="Makita H."/>
            <person name="Sekine M."/>
            <person name="Obayashi M."/>
            <person name="Nishi T."/>
            <person name="Shibahara T."/>
            <person name="Tanaka T."/>
            <person name="Ishii S."/>
            <person name="Yamamoto J."/>
            <person name="Saito K."/>
            <person name="Kawai Y."/>
            <person name="Isono Y."/>
            <person name="Nakamura Y."/>
            <person name="Nagahari K."/>
            <person name="Murakami K."/>
            <person name="Yasuda T."/>
            <person name="Iwayanagi T."/>
            <person name="Wagatsuma M."/>
            <person name="Shiratori A."/>
            <person name="Sudo H."/>
            <person name="Hosoiri T."/>
            <person name="Kaku Y."/>
            <person name="Kodaira H."/>
            <person name="Kondo H."/>
            <person name="Sugawara M."/>
            <person name="Takahashi M."/>
            <person name="Kanda K."/>
            <person name="Yokoi T."/>
            <person name="Furuya T."/>
            <person name="Kikkawa E."/>
            <person name="Omura Y."/>
            <person name="Abe K."/>
            <person name="Kamihara K."/>
            <person name="Katsuta N."/>
            <person name="Sato K."/>
            <person name="Tanikawa M."/>
            <person name="Yamazaki M."/>
            <person name="Ninomiya K."/>
            <person name="Ishibashi T."/>
            <person name="Yamashita H."/>
            <person name="Murakawa K."/>
            <person name="Fujimori K."/>
            <person name="Tanai H."/>
            <person name="Kimata M."/>
            <person name="Watanabe M."/>
            <person name="Hiraoka S."/>
            <person name="Chiba Y."/>
            <person name="Ishida S."/>
            <person name="Ono Y."/>
            <person name="Takiguchi S."/>
            <person name="Watanabe S."/>
            <person name="Yosida M."/>
            <person name="Hotuta T."/>
            <person name="Kusano J."/>
            <person name="Kanehori K."/>
            <person name="Takahashi-Fujii A."/>
            <person name="Hara H."/>
            <person name="Tanase T.-O."/>
            <person name="Nomura Y."/>
            <person name="Togiya S."/>
            <person name="Komai F."/>
            <person name="Hara R."/>
            <person name="Takeuchi K."/>
            <person name="Arita M."/>
            <person name="Imose N."/>
            <person name="Musashino K."/>
            <person name="Yuuki H."/>
            <person name="Oshima A."/>
            <person name="Sasaki N."/>
            <person name="Aotsuka S."/>
            <person name="Yoshikawa Y."/>
            <person name="Matsunawa H."/>
            <person name="Ichihara T."/>
            <person name="Shiohata N."/>
            <person name="Sano S."/>
            <person name="Moriya S."/>
            <person name="Momiyama H."/>
            <person name="Satoh N."/>
            <person name="Takami S."/>
            <person name="Terashima Y."/>
            <person name="Suzuki O."/>
            <person name="Nakagawa S."/>
            <person name="Senoh A."/>
            <person name="Mizoguchi H."/>
            <person name="Goto Y."/>
            <person name="Shimizu F."/>
            <person name="Wakebe H."/>
            <person name="Hishigaki H."/>
            <person name="Watanabe T."/>
            <person name="Sugiyama A."/>
            <person name="Takemoto M."/>
            <person name="Kawakami B."/>
            <person name="Yamazaki M."/>
            <person name="Watanabe K."/>
            <person name="Kumagai A."/>
            <person name="Itakura S."/>
            <person name="Fukuzumi Y."/>
            <person name="Fujimori Y."/>
            <person name="Komiyama M."/>
            <person name="Tashiro H."/>
            <person name="Tanigami A."/>
            <person name="Fujiwara T."/>
            <person name="Ono T."/>
            <person name="Yamada K."/>
            <person name="Fujii Y."/>
            <person name="Ozaki K."/>
            <person name="Hirao M."/>
            <person name="Ohmori Y."/>
            <person name="Kawabata A."/>
            <person name="Hikiji T."/>
            <person name="Kobatake N."/>
            <person name="Inagaki H."/>
            <person name="Ikema Y."/>
            <person name="Okamoto S."/>
            <person name="Okitani R."/>
            <person name="Kawakami T."/>
            <person name="Noguchi S."/>
            <person name="Itoh T."/>
            <person name="Shigeta K."/>
            <person name="Senba T."/>
            <person name="Matsumura K."/>
            <person name="Nakajima Y."/>
            <person name="Mizuno T."/>
            <person name="Morinaga M."/>
            <person name="Sasaki M."/>
            <person name="Togashi T."/>
            <person name="Oyama M."/>
            <person name="Hata H."/>
            <person name="Watanabe M."/>
            <person name="Komatsu T."/>
            <person name="Mizushima-Sugano J."/>
            <person name="Satoh T."/>
            <person name="Shirai Y."/>
            <person name="Takahashi Y."/>
            <person name="Nakagawa K."/>
            <person name="Okumura K."/>
            <person name="Nagase T."/>
            <person name="Nomura N."/>
            <person name="Kikuchi H."/>
            <person name="Masuho Y."/>
            <person name="Yamashita R."/>
            <person name="Nakai K."/>
            <person name="Yada T."/>
            <person name="Nakamura Y."/>
            <person name="Ohara O."/>
            <person name="Isogai T."/>
            <person name="Sugano S."/>
        </authorList>
    </citation>
    <scope>NUCLEOTIDE SEQUENCE [LARGE SCALE MRNA] (ISOFORM 2)</scope>
    <source>
        <tissue evidence="9">Testis</tissue>
    </source>
</reference>
<reference key="2">
    <citation type="journal article" date="2004" name="Nature">
        <title>The DNA sequence and biology of human chromosome 19.</title>
        <authorList>
            <person name="Grimwood J."/>
            <person name="Gordon L.A."/>
            <person name="Olsen A.S."/>
            <person name="Terry A."/>
            <person name="Schmutz J."/>
            <person name="Lamerdin J.E."/>
            <person name="Hellsten U."/>
            <person name="Goodstein D."/>
            <person name="Couronne O."/>
            <person name="Tran-Gyamfi M."/>
            <person name="Aerts A."/>
            <person name="Altherr M."/>
            <person name="Ashworth L."/>
            <person name="Bajorek E."/>
            <person name="Black S."/>
            <person name="Branscomb E."/>
            <person name="Caenepeel S."/>
            <person name="Carrano A.V."/>
            <person name="Caoile C."/>
            <person name="Chan Y.M."/>
            <person name="Christensen M."/>
            <person name="Cleland C.A."/>
            <person name="Copeland A."/>
            <person name="Dalin E."/>
            <person name="Dehal P."/>
            <person name="Denys M."/>
            <person name="Detter J.C."/>
            <person name="Escobar J."/>
            <person name="Flowers D."/>
            <person name="Fotopulos D."/>
            <person name="Garcia C."/>
            <person name="Georgescu A.M."/>
            <person name="Glavina T."/>
            <person name="Gomez M."/>
            <person name="Gonzales E."/>
            <person name="Groza M."/>
            <person name="Hammon N."/>
            <person name="Hawkins T."/>
            <person name="Haydu L."/>
            <person name="Ho I."/>
            <person name="Huang W."/>
            <person name="Israni S."/>
            <person name="Jett J."/>
            <person name="Kadner K."/>
            <person name="Kimball H."/>
            <person name="Kobayashi A."/>
            <person name="Larionov V."/>
            <person name="Leem S.-H."/>
            <person name="Lopez F."/>
            <person name="Lou Y."/>
            <person name="Lowry S."/>
            <person name="Malfatti S."/>
            <person name="Martinez D."/>
            <person name="McCready P.M."/>
            <person name="Medina C."/>
            <person name="Morgan J."/>
            <person name="Nelson K."/>
            <person name="Nolan M."/>
            <person name="Ovcharenko I."/>
            <person name="Pitluck S."/>
            <person name="Pollard M."/>
            <person name="Popkie A.P."/>
            <person name="Predki P."/>
            <person name="Quan G."/>
            <person name="Ramirez L."/>
            <person name="Rash S."/>
            <person name="Retterer J."/>
            <person name="Rodriguez A."/>
            <person name="Rogers S."/>
            <person name="Salamov A."/>
            <person name="Salazar A."/>
            <person name="She X."/>
            <person name="Smith D."/>
            <person name="Slezak T."/>
            <person name="Solovyev V."/>
            <person name="Thayer N."/>
            <person name="Tice H."/>
            <person name="Tsai M."/>
            <person name="Ustaszewska A."/>
            <person name="Vo N."/>
            <person name="Wagner M."/>
            <person name="Wheeler J."/>
            <person name="Wu K."/>
            <person name="Xie G."/>
            <person name="Yang J."/>
            <person name="Dubchak I."/>
            <person name="Furey T.S."/>
            <person name="DeJong P."/>
            <person name="Dickson M."/>
            <person name="Gordon D."/>
            <person name="Eichler E.E."/>
            <person name="Pennacchio L.A."/>
            <person name="Richardson P."/>
            <person name="Stubbs L."/>
            <person name="Rokhsar D.S."/>
            <person name="Myers R.M."/>
            <person name="Rubin E.M."/>
            <person name="Lucas S.M."/>
        </authorList>
    </citation>
    <scope>NUCLEOTIDE SEQUENCE [LARGE SCALE GENOMIC DNA]</scope>
</reference>
<reference key="3">
    <citation type="submission" date="2005-09" db="EMBL/GenBank/DDBJ databases">
        <authorList>
            <person name="Mural R.J."/>
            <person name="Istrail S."/>
            <person name="Sutton G.G."/>
            <person name="Florea L."/>
            <person name="Halpern A.L."/>
            <person name="Mobarry C.M."/>
            <person name="Lippert R."/>
            <person name="Walenz B."/>
            <person name="Shatkay H."/>
            <person name="Dew I."/>
            <person name="Miller J.R."/>
            <person name="Flanigan M.J."/>
            <person name="Edwards N.J."/>
            <person name="Bolanos R."/>
            <person name="Fasulo D."/>
            <person name="Halldorsson B.V."/>
            <person name="Hannenhalli S."/>
            <person name="Turner R."/>
            <person name="Yooseph S."/>
            <person name="Lu F."/>
            <person name="Nusskern D.R."/>
            <person name="Shue B.C."/>
            <person name="Zheng X.H."/>
            <person name="Zhong F."/>
            <person name="Delcher A.L."/>
            <person name="Huson D.H."/>
            <person name="Kravitz S.A."/>
            <person name="Mouchard L."/>
            <person name="Reinert K."/>
            <person name="Remington K.A."/>
            <person name="Clark A.G."/>
            <person name="Waterman M.S."/>
            <person name="Eichler E.E."/>
            <person name="Adams M.D."/>
            <person name="Hunkapiller M.W."/>
            <person name="Myers E.W."/>
            <person name="Venter J.C."/>
        </authorList>
    </citation>
    <scope>NUCLEOTIDE SEQUENCE [LARGE SCALE GENOMIC DNA]</scope>
</reference>
<reference evidence="7 8" key="4">
    <citation type="journal article" date="2004" name="Genome Res.">
        <title>The status, quality, and expansion of the NIH full-length cDNA project: the Mammalian Gene Collection (MGC).</title>
        <authorList>
            <consortium name="The MGC Project Team"/>
        </authorList>
    </citation>
    <scope>NUCLEOTIDE SEQUENCE [LARGE SCALE MRNA] (ISOFORM 1)</scope>
    <source>
        <tissue evidence="8">Brain</tissue>
    </source>
</reference>
<reference evidence="7" key="5">
    <citation type="journal article" date="2006" name="Genomics">
        <title>Fourteen novel human members of mitochondrial solute carrier family 25 (SLC25) widely expressed in the central nervous system.</title>
        <authorList>
            <person name="Haitina T."/>
            <person name="Lindblom J."/>
            <person name="Renstroem T."/>
            <person name="Fredriksson R."/>
        </authorList>
    </citation>
    <scope>IDENTIFICATION</scope>
</reference>
<feature type="chain" id="PRO_0000319990" description="Mitochondrial carrier protein SCaMC-3L">
    <location>
        <begin position="1"/>
        <end position="370"/>
    </location>
</feature>
<feature type="transmembrane region" description="Helical; Name=1" evidence="3">
    <location>
        <begin position="96"/>
        <end position="113"/>
    </location>
</feature>
<feature type="transmembrane region" description="Helical; Name=2" evidence="3">
    <location>
        <begin position="151"/>
        <end position="170"/>
    </location>
</feature>
<feature type="transmembrane region" description="Helical; Name=3" evidence="3">
    <location>
        <begin position="194"/>
        <end position="207"/>
    </location>
</feature>
<feature type="transmembrane region" description="Helical; Name=4" evidence="3">
    <location>
        <begin position="245"/>
        <end position="263"/>
    </location>
</feature>
<feature type="transmembrane region" description="Helical; Name=5" evidence="3">
    <location>
        <begin position="282"/>
        <end position="306"/>
    </location>
</feature>
<feature type="transmembrane region" description="Helical; Name=6" evidence="3">
    <location>
        <begin position="342"/>
        <end position="361"/>
    </location>
</feature>
<feature type="repeat" description="Solcar 1" evidence="3">
    <location>
        <begin position="90"/>
        <end position="176"/>
    </location>
</feature>
<feature type="repeat" description="Solcar 2" evidence="3">
    <location>
        <begin position="184"/>
        <end position="269"/>
    </location>
</feature>
<feature type="repeat" description="Solcar 3" evidence="3">
    <location>
        <begin position="280"/>
        <end position="367"/>
    </location>
</feature>
<feature type="splice variant" id="VSP_052690" description="In isoform 2." evidence="6">
    <original>QVYSSKTNFTNLLGGLQSMVQEGGFRSLWRGNGINVLKIAPEYAIKFSVFEQCKNYFCGIQGSPPFQERLLAGSLAVAISQTLINPMEVLKTRLTLRRTGQYKGLLDCARQILQREGTRALY</original>
    <variation>QLLGRLRQENRLNLGGGGCSEPRSPDRTPAWATESTPPRRTSPTCWGGYRAWSRRAASAPCGGATASTCSRLLLSMPSSSPYSSSARITSVEYKGPRPSRSVSLLAPWLWPSPRPSSTPWRC</variation>
    <location>
        <begin position="121"/>
        <end position="242"/>
    </location>
</feature>
<feature type="splice variant" id="VSP_035524" description="In isoform 2." evidence="6">
    <location>
        <begin position="243"/>
        <end position="370"/>
    </location>
</feature>
<feature type="sequence variant" id="VAR_050132" description="In dbSNP:rs34488963.">
    <original>G</original>
    <variation>S</variation>
    <location>
        <position position="144"/>
    </location>
</feature>
<feature type="sequence variant" id="VAR_050133" description="In dbSNP:rs11883242.">
    <original>T</original>
    <variation>S</variation>
    <location>
        <position position="258"/>
    </location>
</feature>
<protein>
    <recommendedName>
        <fullName evidence="7">Mitochondrial carrier protein SCaMC-3L</fullName>
    </recommendedName>
    <alternativeName>
        <fullName evidence="7">Mitochondrial ATP-Mg/Pi carrier protein SLC25A41</fullName>
    </alternativeName>
    <alternativeName>
        <fullName>Small calcium-binding mitochondrial carrier protein 3-like</fullName>
        <shortName evidence="2">SCaMC-3-like</shortName>
        <shortName evidence="2">SCaMC-3L</shortName>
    </alternativeName>
    <alternativeName>
        <fullName>Solute carrier family 25 member 41</fullName>
    </alternativeName>
</protein>
<keyword id="KW-0025">Alternative splicing</keyword>
<keyword id="KW-0472">Membrane</keyword>
<keyword id="KW-0496">Mitochondrion</keyword>
<keyword id="KW-0999">Mitochondrion inner membrane</keyword>
<keyword id="KW-1267">Proteomics identification</keyword>
<keyword id="KW-1185">Reference proteome</keyword>
<keyword id="KW-0677">Repeat</keyword>
<keyword id="KW-0812">Transmembrane</keyword>
<keyword id="KW-1133">Transmembrane helix</keyword>
<keyword id="KW-0813">Transport</keyword>
<gene>
    <name evidence="10" type="primary">SLC25A41</name>
</gene>
<sequence length="370" mass="40795">MGAQPGEPQNTCSRIQTLFRRVKTLLIKAPPPPQPPPPPPSWNPGCTHVYGYAFGHMHDNNLEHLPSQQVLDTGEQLMVPVEVLEVDNKEALWKFLLSGAMAGAVSRTGTAPLDRAKVYMQVYSSKTNFTNLLGGLQSMVQEGGFRSLWRGNGINVLKIAPEYAIKFSVFEQCKNYFCGIQGSPPFQERLLAGSLAVAISQTLINPMEVLKTRLTLRRTGQYKGLLDCARQILQREGTRALYRGYLPNMLGIIPYACTDLAVYEMLQCFWVKSGRDMGDPSGLVSLSSVTLSTTCGQMASYPLTLVRTRMQAQDTVEGSNPTMRGVLQRILAQQGWLGLYRGMTPTLLKVLPAGGISYVVYEAMKKTLGI</sequence>
<comment type="function">
    <text evidence="2">Calcium-independent ATP-Mg/Pi exchanger that catalyzes the electroneutral exchange of Mg-ATP or free ADP against an hydrogenphosphate and participates in the net transport of adenine nucleotides across the mitochondria inner membrane.</text>
</comment>
<comment type="catalytic activity">
    <reaction evidence="2">
        <text>Mg(2+)(out) + phosphate(in) + ATP(out) = Mg(2+)(in) + phosphate(out) + ATP(in)</text>
        <dbReference type="Rhea" id="RHEA:65840"/>
        <dbReference type="ChEBI" id="CHEBI:18420"/>
        <dbReference type="ChEBI" id="CHEBI:30616"/>
        <dbReference type="ChEBI" id="CHEBI:43474"/>
    </reaction>
</comment>
<comment type="catalytic activity">
    <reaction evidence="2">
        <text>ADP(out) + phosphate(in) + H(+)(out) = ADP(in) + phosphate(out) + H(+)(in)</text>
        <dbReference type="Rhea" id="RHEA:65844"/>
        <dbReference type="ChEBI" id="CHEBI:15378"/>
        <dbReference type="ChEBI" id="CHEBI:43474"/>
        <dbReference type="ChEBI" id="CHEBI:456216"/>
    </reaction>
</comment>
<comment type="subcellular location">
    <subcellularLocation>
        <location evidence="2">Mitochondrion inner membrane</location>
        <topology evidence="1">Multi-pass membrane protein</topology>
    </subcellularLocation>
</comment>
<comment type="alternative products">
    <event type="alternative splicing"/>
    <isoform>
        <id>Q8N5S1-1</id>
        <name evidence="5">1</name>
        <sequence type="displayed"/>
    </isoform>
    <isoform>
        <id>Q8N5S1-2</id>
        <name evidence="4">2</name>
        <sequence type="described" ref="VSP_052690 VSP_035524"/>
    </isoform>
</comment>
<comment type="miscellaneous">
    <molecule>Isoform 2</molecule>
    <text evidence="7">May be produced at very low levels due to a premature stop codon in the mRNA, leading to nonsense-mediated mRNA decay.</text>
</comment>
<comment type="similarity">
    <text evidence="7">Belongs to the mitochondrial carrier (TC 2.A.29) family.</text>
</comment>
<comment type="sequence caution" evidence="7">
    <conflict type="erroneous initiation">
        <sequence resource="EMBL-CDS" id="AAH31671"/>
    </conflict>
</comment>
<comment type="sequence caution" evidence="7">
    <conflict type="erroneous translation">
        <sequence resource="EMBL-CDS" id="BAC05163"/>
    </conflict>
    <text>Wrong choice of CDS.</text>
</comment>
<name>S2541_HUMAN</name>
<dbReference type="EMBL" id="AK097761">
    <property type="protein sequence ID" value="BAC05163.1"/>
    <property type="status" value="ALT_SEQ"/>
    <property type="molecule type" value="mRNA"/>
</dbReference>
<dbReference type="EMBL" id="AC011539">
    <property type="status" value="NOT_ANNOTATED_CDS"/>
    <property type="molecule type" value="Genomic_DNA"/>
</dbReference>
<dbReference type="EMBL" id="CH471139">
    <property type="protein sequence ID" value="EAW69092.1"/>
    <property type="molecule type" value="Genomic_DNA"/>
</dbReference>
<dbReference type="EMBL" id="CH471139">
    <property type="protein sequence ID" value="EAW69094.1"/>
    <property type="molecule type" value="Genomic_DNA"/>
</dbReference>
<dbReference type="EMBL" id="CH471139">
    <property type="protein sequence ID" value="EAW69093.1"/>
    <property type="molecule type" value="Genomic_DNA"/>
</dbReference>
<dbReference type="EMBL" id="BC031671">
    <property type="protein sequence ID" value="AAH31671.1"/>
    <property type="status" value="ALT_INIT"/>
    <property type="molecule type" value="mRNA"/>
</dbReference>
<dbReference type="CCDS" id="CCDS45937.1">
    <molecule id="Q8N5S1-1"/>
</dbReference>
<dbReference type="RefSeq" id="NP_001308227.1">
    <property type="nucleotide sequence ID" value="NM_001321298.1"/>
</dbReference>
<dbReference type="RefSeq" id="NP_775908.2">
    <molecule id="Q8N5S1-1"/>
    <property type="nucleotide sequence ID" value="NM_173637.4"/>
</dbReference>
<dbReference type="SMR" id="Q8N5S1"/>
<dbReference type="BioGRID" id="129873">
    <property type="interactions" value="89"/>
</dbReference>
<dbReference type="FunCoup" id="Q8N5S1">
    <property type="interactions" value="67"/>
</dbReference>
<dbReference type="IntAct" id="Q8N5S1">
    <property type="interactions" value="68"/>
</dbReference>
<dbReference type="STRING" id="9606.ENSP00000322649"/>
<dbReference type="TCDB" id="2.A.29.23.6">
    <property type="family name" value="the mitochondrial carrier (mc) family"/>
</dbReference>
<dbReference type="GlyGen" id="Q8N5S1">
    <property type="glycosylation" value="2 sites, 1 O-linked glycan (2 sites)"/>
</dbReference>
<dbReference type="iPTMnet" id="Q8N5S1"/>
<dbReference type="PhosphoSitePlus" id="Q8N5S1"/>
<dbReference type="BioMuta" id="SLC25A41"/>
<dbReference type="DMDM" id="172046142"/>
<dbReference type="MassIVE" id="Q8N5S1"/>
<dbReference type="PaxDb" id="9606-ENSP00000322649"/>
<dbReference type="PeptideAtlas" id="Q8N5S1"/>
<dbReference type="ProteomicsDB" id="72088">
    <molecule id="Q8N5S1-1"/>
</dbReference>
<dbReference type="ProteomicsDB" id="72089">
    <molecule id="Q8N5S1-2"/>
</dbReference>
<dbReference type="Antibodypedia" id="49970">
    <property type="antibodies" value="12 antibodies from 10 providers"/>
</dbReference>
<dbReference type="DNASU" id="284427"/>
<dbReference type="Ensembl" id="ENST00000321510.7">
    <molecule id="Q8N5S1-1"/>
    <property type="protein sequence ID" value="ENSP00000322649.5"/>
    <property type="gene ID" value="ENSG00000181240.14"/>
</dbReference>
<dbReference type="Ensembl" id="ENST00000458275.6">
    <molecule id="Q8N5S1-2"/>
    <property type="protein sequence ID" value="ENSP00000405411.1"/>
    <property type="gene ID" value="ENSG00000181240.14"/>
</dbReference>
<dbReference type="Ensembl" id="ENST00000597558.5">
    <molecule id="Q8N5S1-1"/>
    <property type="protein sequence ID" value="ENSP00000471238.1"/>
    <property type="gene ID" value="ENSG00000181240.14"/>
</dbReference>
<dbReference type="GeneID" id="284427"/>
<dbReference type="KEGG" id="hsa:284427"/>
<dbReference type="MANE-Select" id="ENST00000321510.7">
    <property type="protein sequence ID" value="ENSP00000322649.5"/>
    <property type="RefSeq nucleotide sequence ID" value="NM_173637.4"/>
    <property type="RefSeq protein sequence ID" value="NP_775908.2"/>
</dbReference>
<dbReference type="UCSC" id="uc010dus.4">
    <molecule id="Q8N5S1-1"/>
    <property type="organism name" value="human"/>
</dbReference>
<dbReference type="AGR" id="HGNC:28533"/>
<dbReference type="CTD" id="284427"/>
<dbReference type="GeneCards" id="SLC25A41"/>
<dbReference type="HGNC" id="HGNC:28533">
    <property type="gene designation" value="SLC25A41"/>
</dbReference>
<dbReference type="HPA" id="ENSG00000181240">
    <property type="expression patterns" value="Tissue enhanced (brain, testis)"/>
</dbReference>
<dbReference type="MIM" id="610822">
    <property type="type" value="gene"/>
</dbReference>
<dbReference type="neXtProt" id="NX_Q8N5S1"/>
<dbReference type="OpenTargets" id="ENSG00000181240"/>
<dbReference type="PharmGKB" id="PA162403684"/>
<dbReference type="VEuPathDB" id="HostDB:ENSG00000181240"/>
<dbReference type="eggNOG" id="KOG0036">
    <property type="taxonomic scope" value="Eukaryota"/>
</dbReference>
<dbReference type="GeneTree" id="ENSGT00940000162419"/>
<dbReference type="HOGENOM" id="CLU_015166_10_2_1"/>
<dbReference type="InParanoid" id="Q8N5S1"/>
<dbReference type="OMA" id="ESPPFQE"/>
<dbReference type="OrthoDB" id="270584at2759"/>
<dbReference type="PAN-GO" id="Q8N5S1">
    <property type="GO annotations" value="1 GO annotation based on evolutionary models"/>
</dbReference>
<dbReference type="PhylomeDB" id="Q8N5S1"/>
<dbReference type="TreeFam" id="TF313492"/>
<dbReference type="PathwayCommons" id="Q8N5S1"/>
<dbReference type="SignaLink" id="Q8N5S1"/>
<dbReference type="BioGRID-ORCS" id="284427">
    <property type="hits" value="41 hits in 1160 CRISPR screens"/>
</dbReference>
<dbReference type="ChiTaRS" id="SLC25A41">
    <property type="organism name" value="human"/>
</dbReference>
<dbReference type="GenomeRNAi" id="284427"/>
<dbReference type="Pharos" id="Q8N5S1">
    <property type="development level" value="Tdark"/>
</dbReference>
<dbReference type="PRO" id="PR:Q8N5S1"/>
<dbReference type="Proteomes" id="UP000005640">
    <property type="component" value="Chromosome 19"/>
</dbReference>
<dbReference type="RNAct" id="Q8N5S1">
    <property type="molecule type" value="protein"/>
</dbReference>
<dbReference type="Bgee" id="ENSG00000181240">
    <property type="expression patterns" value="Expressed in cerebellar hemisphere and 88 other cell types or tissues"/>
</dbReference>
<dbReference type="GO" id="GO:0005743">
    <property type="term" value="C:mitochondrial inner membrane"/>
    <property type="evidence" value="ECO:0007669"/>
    <property type="project" value="UniProtKB-SubCell"/>
</dbReference>
<dbReference type="GO" id="GO:0005739">
    <property type="term" value="C:mitochondrion"/>
    <property type="evidence" value="ECO:0000250"/>
    <property type="project" value="UniProtKB"/>
</dbReference>
<dbReference type="GO" id="GO:0015217">
    <property type="term" value="F:ADP transmembrane transporter activity"/>
    <property type="evidence" value="ECO:0000250"/>
    <property type="project" value="UniProtKB"/>
</dbReference>
<dbReference type="GO" id="GO:0005347">
    <property type="term" value="F:ATP transmembrane transporter activity"/>
    <property type="evidence" value="ECO:0000250"/>
    <property type="project" value="UniProtKB"/>
</dbReference>
<dbReference type="GO" id="GO:0015866">
    <property type="term" value="P:ADP transport"/>
    <property type="evidence" value="ECO:0000250"/>
    <property type="project" value="UniProtKB"/>
</dbReference>
<dbReference type="GO" id="GO:0015867">
    <property type="term" value="P:ATP transport"/>
    <property type="evidence" value="ECO:0000250"/>
    <property type="project" value="UniProtKB"/>
</dbReference>
<dbReference type="GO" id="GO:0140021">
    <property type="term" value="P:mitochondrial ADP transmembrane transport"/>
    <property type="evidence" value="ECO:0000250"/>
    <property type="project" value="UniProtKB"/>
</dbReference>
<dbReference type="GO" id="GO:1990544">
    <property type="term" value="P:mitochondrial ATP transmembrane transport"/>
    <property type="evidence" value="ECO:0000250"/>
    <property type="project" value="UniProtKB"/>
</dbReference>
<dbReference type="FunFam" id="1.50.40.10:FF:000003">
    <property type="entry name" value="Putative calcium-binding mitochondrial carrier protein scamc-2"/>
    <property type="match status" value="1"/>
</dbReference>
<dbReference type="Gene3D" id="1.50.40.10">
    <property type="entry name" value="Mitochondrial carrier domain"/>
    <property type="match status" value="1"/>
</dbReference>
<dbReference type="InterPro" id="IPR002067">
    <property type="entry name" value="Mit_carrier"/>
</dbReference>
<dbReference type="InterPro" id="IPR018108">
    <property type="entry name" value="Mitochondrial_sb/sol_carrier"/>
</dbReference>
<dbReference type="InterPro" id="IPR023395">
    <property type="entry name" value="Mt_carrier_dom_sf"/>
</dbReference>
<dbReference type="PANTHER" id="PTHR24089">
    <property type="entry name" value="SOLUTE CARRIER FAMILY 25"/>
    <property type="match status" value="1"/>
</dbReference>
<dbReference type="Pfam" id="PF00153">
    <property type="entry name" value="Mito_carr"/>
    <property type="match status" value="3"/>
</dbReference>
<dbReference type="PRINTS" id="PR00926">
    <property type="entry name" value="MITOCARRIER"/>
</dbReference>
<dbReference type="SUPFAM" id="SSF103506">
    <property type="entry name" value="Mitochondrial carrier"/>
    <property type="match status" value="1"/>
</dbReference>
<dbReference type="PROSITE" id="PS50920">
    <property type="entry name" value="SOLCAR"/>
    <property type="match status" value="3"/>
</dbReference>
<evidence type="ECO:0000250" key="1">
    <source>
        <dbReference type="UniProtKB" id="O94502"/>
    </source>
</evidence>
<evidence type="ECO:0000250" key="2">
    <source>
        <dbReference type="UniProtKB" id="Q8BVN7"/>
    </source>
</evidence>
<evidence type="ECO:0000255" key="3"/>
<evidence type="ECO:0000269" key="4">
    <source>
    </source>
</evidence>
<evidence type="ECO:0000269" key="5">
    <source>
    </source>
</evidence>
<evidence type="ECO:0000303" key="6">
    <source>
    </source>
</evidence>
<evidence type="ECO:0000305" key="7"/>
<evidence type="ECO:0000312" key="8">
    <source>
        <dbReference type="EMBL" id="AAH31671.1"/>
    </source>
</evidence>
<evidence type="ECO:0000312" key="9">
    <source>
        <dbReference type="EMBL" id="BAC05163.1"/>
    </source>
</evidence>
<evidence type="ECO:0000312" key="10">
    <source>
        <dbReference type="HGNC" id="HGNC:28533"/>
    </source>
</evidence>
<accession>Q8N5S1</accession>
<accession>A8MQ40</accession>
<accession>D6W642</accession>
<accession>Q8N7R4</accession>
<proteinExistence type="evidence at protein level"/>